<comment type="function">
    <text evidence="1">May participate in wall plasticization and/or intussusception or in cell wall turnover.</text>
</comment>
<comment type="subcellular location">
    <subcellularLocation>
        <location evidence="1">Secreted</location>
        <location evidence="1">Cell wall</location>
    </subcellularLocation>
    <subcellularLocation>
        <location evidence="1">Membrane</location>
        <topology evidence="1">Peripheral membrane protein</topology>
    </subcellularLocation>
</comment>
<evidence type="ECO:0000250" key="1"/>
<evidence type="ECO:0000255" key="2"/>
<evidence type="ECO:0000269" key="3">
    <source>
    </source>
</evidence>
<evidence type="ECO:0000269" key="4">
    <source>
    </source>
</evidence>
<evidence type="ECO:0000305" key="5"/>
<keyword id="KW-0134">Cell wall</keyword>
<keyword id="KW-0325">Glycoprotein</keyword>
<keyword id="KW-0378">Hydrolase</keyword>
<keyword id="KW-0472">Membrane</keyword>
<keyword id="KW-0645">Protease</keyword>
<keyword id="KW-1185">Reference proteome</keyword>
<keyword id="KW-0964">Secreted</keyword>
<keyword id="KW-0720">Serine protease</keyword>
<keyword id="KW-0732">Signal</keyword>
<name>WAPP_COCPS</name>
<reference key="1">
    <citation type="submission" date="2010-03" db="EMBL/GenBank/DDBJ databases">
        <title>The genome sequence of Coccidioides posadasii strain Silveira.</title>
        <authorList>
            <consortium name="The Broad Institute Genome Sequencing Center for Infectious Disease"/>
            <person name="Neafsey D."/>
            <person name="Orbach M."/>
            <person name="Henn M.R."/>
            <person name="Cole G.T."/>
            <person name="Galgiani J."/>
            <person name="Gardner M.J."/>
            <person name="Kirkland T.N."/>
            <person name="Taylor J.W."/>
            <person name="Young S.K."/>
            <person name="Zeng Q."/>
            <person name="Koehrsen M."/>
            <person name="Alvarado L."/>
            <person name="Berlin A."/>
            <person name="Borenstein D."/>
            <person name="Chapman S.B."/>
            <person name="Chen Z."/>
            <person name="Engels R."/>
            <person name="Freedman E."/>
            <person name="Gellesch M."/>
            <person name="Goldberg J."/>
            <person name="Griggs A."/>
            <person name="Gujja S."/>
            <person name="Heilman E."/>
            <person name="Heiman D."/>
            <person name="Howarth C."/>
            <person name="Jen D."/>
            <person name="Larson L."/>
            <person name="Mehta T."/>
            <person name="Neiman D."/>
            <person name="Park D."/>
            <person name="Pearson M."/>
            <person name="Richards J."/>
            <person name="Roberts A."/>
            <person name="Saif S."/>
            <person name="Shea T."/>
            <person name="Shenoy N."/>
            <person name="Sisk P."/>
            <person name="Stolte C."/>
            <person name="Sykes S."/>
            <person name="Walk T."/>
            <person name="White J."/>
            <person name="Yandava C."/>
            <person name="Haas B."/>
            <person name="Nusbaum C."/>
            <person name="Birren B."/>
        </authorList>
    </citation>
    <scope>NUCLEOTIDE SEQUENCE [LARGE SCALE GENOMIC DNA]</scope>
    <source>
        <strain>RMSCC 757 / Silveira</strain>
    </source>
</reference>
<reference key="2">
    <citation type="journal article" date="1997" name="Proc. Natl. Acad. Sci. U.S.A.">
        <title>Concordance of gene genealogies reveals reproductive isolation in the pathogenic fungus Coccidioides immitis.</title>
        <authorList>
            <person name="Koufopanou V."/>
            <person name="Burt A."/>
            <person name="Taylor J.W."/>
        </authorList>
    </citation>
    <scope>NUCLEOTIDE SEQUENCE [GENOMIC DNA] OF 85-261</scope>
    <scope>VARIANTS SER-222; ASP-247 AND ILE-249</scope>
    <source>
        <strain>RMSCC 1036 / AZ1</strain>
        <strain>RMSCC 1045 / AZ2</strain>
        <strain>RMSCC 2128 / TX1</strain>
        <strain>RMSCC 757 / Silveira</strain>
    </source>
</reference>
<reference key="3">
    <citation type="journal article" date="1998" name="Proc. Natl. Acad. Sci. U.S.A.">
        <authorList>
            <person name="Koufopanou V."/>
            <person name="Burt A."/>
            <person name="Taylor J.W."/>
        </authorList>
    </citation>
    <scope>ERRATUM OF PUBMED:9144263</scope>
</reference>
<reference key="4">
    <citation type="journal article" date="2006" name="Nippon Ishinkin Gakkai Zasshi">
        <title>Reexamination of Coccidioides spp. reserved in the Research Center for Pathogenic Fungi and Microbial Toxicoses, Chiba University, based on a multiple gene analysis.</title>
        <authorList>
            <person name="Sano A."/>
            <person name="Miyaji M."/>
            <person name="Kamei K."/>
            <person name="Mikami Y."/>
            <person name="Nishimura K."/>
        </authorList>
    </citation>
    <scope>NUCLEOTIDE SEQUENCE [GENOMIC DNA] OF 85-261</scope>
    <scope>VARIANTS SER-222; ASP-247 AND ILE-249</scope>
    <source>
        <strain>IFM 45809 / Silveira</strain>
        <strain>IFM 45810 / Silveira</strain>
        <strain>IFM 45811</strain>
        <strain>IFM 45812</strain>
        <strain>IFM 45813</strain>
        <strain>IFM 45817</strain>
        <strain>IFM 4935</strain>
        <strain>IFM 4945</strain>
        <strain>IFM 50993</strain>
        <strain>IFM 50994</strain>
        <strain>IFM 51112</strain>
        <strain>IFM 54194</strain>
        <strain>IFM 54195</strain>
        <strain>IFM 54196</strain>
    </source>
</reference>
<protein>
    <recommendedName>
        <fullName>Wall-associated proteinase</fullName>
        <ecNumber>3.4.21.-</ecNumber>
    </recommendedName>
</protein>
<feature type="signal peptide" evidence="2">
    <location>
        <begin position="1"/>
        <end status="unknown"/>
    </location>
</feature>
<feature type="chain" id="PRO_0000409490" description="Wall-associated proteinase">
    <location>
        <begin status="unknown"/>
        <end position="309"/>
    </location>
</feature>
<feature type="glycosylation site" description="N-linked (GlcNAc...) asparagine" evidence="2">
    <location>
        <position position="190"/>
    </location>
</feature>
<feature type="glycosylation site" description="N-linked (GlcNAc...) asparagine" evidence="2">
    <location>
        <position position="295"/>
    </location>
</feature>
<feature type="sequence variant" description="In strain: IFM 45817, IFM 50993, IFM 54196 and RMSCC 1036 / AZ1." evidence="3 4">
    <original>R</original>
    <variation>S</variation>
    <location>
        <position position="222"/>
    </location>
</feature>
<feature type="sequence variant" description="In strain: IFM 45812, IFM 4935, IFM 51112 and RMSCC 2128 / TX1." evidence="3 4">
    <original>N</original>
    <variation>D</variation>
    <location>
        <position position="247"/>
    </location>
</feature>
<feature type="sequence variant" description="In strain: IFM 45811, IFM 45812, IFM 45813, IFM 45817, IFM 4935, IFM 4945, IFM 50993, IFM 50994, IFM 51112, IFM 54194, IFM 54195, IFM 54196, RMSCC 1036 / AZ1, RMSCC 1045 / AZ2 and RMSCC 2128 / TX1." evidence="3 4">
    <original>V</original>
    <variation>I</variation>
    <location>
        <position position="249"/>
    </location>
</feature>
<feature type="sequence conflict" description="In Ref. 1; EFW19467." evidence="5" ref="1">
    <original>G</original>
    <variation>A</variation>
    <location>
        <position position="196"/>
    </location>
</feature>
<organism>
    <name type="scientific">Coccidioides posadasii (strain RMSCC 757 / Silveira)</name>
    <name type="common">Valley fever fungus</name>
    <dbReference type="NCBI Taxonomy" id="443226"/>
    <lineage>
        <taxon>Eukaryota</taxon>
        <taxon>Fungi</taxon>
        <taxon>Dikarya</taxon>
        <taxon>Ascomycota</taxon>
        <taxon>Pezizomycotina</taxon>
        <taxon>Eurotiomycetes</taxon>
        <taxon>Eurotiomycetidae</taxon>
        <taxon>Onygenales</taxon>
        <taxon>Onygenaceae</taxon>
        <taxon>Coccidioides</taxon>
    </lineage>
</organism>
<sequence>MASPVTVLENPIPKSGQHLLFFLTSKQQLALEQRPIESSLGYSAYVDHGVSQGVIVNPSSIAAAMRSSLITVYGITKPGTDKQYISVISPTYNLIANRQNQPIETTQKALAACSDNDRNNWVYYLNLPQGTAQYAIYELNIQDSTSAPTVYSGPTPSGNSNLAAVYFSPNKDRFIIFSNTDTRHYLYWVNSTLQSGNRIAGTGSVMSASPLAATTITNVQTRSMTIFLYYMDVNTLLNRIVGKVTDNEVHWYANQVVEGAPPMKVDTLLTGVVVEEKWNCLYYIPDGDTEFRAFNDTIRDSFFDEPREG</sequence>
<gene>
    <name type="ORF">CPSG_03850</name>
</gene>
<accession>E9D2Q2</accession>
<accession>C5PDD2</accession>
<accession>P42783</accession>
<accession>Q400X6</accession>
<accession>Q400Y3</accession>
<accession>Q400Y4</accession>
<accession>Q400Y5</accession>
<accession>Q9C2W3</accession>
<accession>Q9C2W4</accession>
<accession>Q9C2W5</accession>
<accession>Q9C2W6</accession>
<dbReference type="EC" id="3.4.21.-"/>
<dbReference type="EMBL" id="GL636490">
    <property type="protein sequence ID" value="EFW19467.1"/>
    <property type="molecule type" value="Genomic_DNA"/>
</dbReference>
<dbReference type="EMBL" id="AJ408857">
    <property type="protein sequence ID" value="CAC29123.1"/>
    <property type="molecule type" value="Genomic_DNA"/>
</dbReference>
<dbReference type="EMBL" id="AJ408858">
    <property type="protein sequence ID" value="CAC29124.1"/>
    <property type="molecule type" value="Genomic_DNA"/>
</dbReference>
<dbReference type="EMBL" id="AJ408859">
    <property type="protein sequence ID" value="CAC29125.1"/>
    <property type="molecule type" value="Genomic_DNA"/>
</dbReference>
<dbReference type="EMBL" id="AJ408860">
    <property type="protein sequence ID" value="CAC29126.1"/>
    <property type="molecule type" value="Genomic_DNA"/>
</dbReference>
<dbReference type="EMBL" id="AB232726">
    <property type="protein sequence ID" value="BAE20270.1"/>
    <property type="molecule type" value="Genomic_DNA"/>
</dbReference>
<dbReference type="EMBL" id="AB232727">
    <property type="protein sequence ID" value="BAE20271.1"/>
    <property type="molecule type" value="Genomic_DNA"/>
</dbReference>
<dbReference type="EMBL" id="AB232728">
    <property type="protein sequence ID" value="BAE20272.1"/>
    <property type="molecule type" value="Genomic_DNA"/>
</dbReference>
<dbReference type="EMBL" id="AB232729">
    <property type="protein sequence ID" value="BAE20273.1"/>
    <property type="molecule type" value="Genomic_DNA"/>
</dbReference>
<dbReference type="EMBL" id="AB232730">
    <property type="protein sequence ID" value="BAE20274.1"/>
    <property type="molecule type" value="Genomic_DNA"/>
</dbReference>
<dbReference type="EMBL" id="AB232731">
    <property type="protein sequence ID" value="BAE20275.1"/>
    <property type="molecule type" value="Genomic_DNA"/>
</dbReference>
<dbReference type="EMBL" id="AB232732">
    <property type="protein sequence ID" value="BAE20276.1"/>
    <property type="molecule type" value="Genomic_DNA"/>
</dbReference>
<dbReference type="EMBL" id="AB232735">
    <property type="protein sequence ID" value="BAE20279.1"/>
    <property type="molecule type" value="Genomic_DNA"/>
</dbReference>
<dbReference type="EMBL" id="AB232738">
    <property type="protein sequence ID" value="BAE20282.1"/>
    <property type="molecule type" value="Genomic_DNA"/>
</dbReference>
<dbReference type="EMBL" id="AB232739">
    <property type="protein sequence ID" value="BAE20283.1"/>
    <property type="molecule type" value="Genomic_DNA"/>
</dbReference>
<dbReference type="EMBL" id="AB232741">
    <property type="protein sequence ID" value="BAE20285.1"/>
    <property type="molecule type" value="Genomic_DNA"/>
</dbReference>
<dbReference type="EMBL" id="AB232742">
    <property type="protein sequence ID" value="BAE20286.1"/>
    <property type="molecule type" value="Genomic_DNA"/>
</dbReference>
<dbReference type="EMBL" id="AB232743">
    <property type="protein sequence ID" value="BAE20287.1"/>
    <property type="molecule type" value="Genomic_DNA"/>
</dbReference>
<dbReference type="EMBL" id="AB232744">
    <property type="protein sequence ID" value="BAE20288.1"/>
    <property type="molecule type" value="Genomic_DNA"/>
</dbReference>
<dbReference type="SMR" id="E9D2Q2"/>
<dbReference type="VEuPathDB" id="FungiDB:D8B26_007693"/>
<dbReference type="eggNOG" id="ENOG502SW3V">
    <property type="taxonomic scope" value="Eukaryota"/>
</dbReference>
<dbReference type="HOGENOM" id="CLU_900182_0_0_1"/>
<dbReference type="OrthoDB" id="40888at33183"/>
<dbReference type="Proteomes" id="UP000002497">
    <property type="component" value="Unassembled WGS sequence"/>
</dbReference>
<dbReference type="GO" id="GO:0005576">
    <property type="term" value="C:extracellular region"/>
    <property type="evidence" value="ECO:0007669"/>
    <property type="project" value="UniProtKB-KW"/>
</dbReference>
<dbReference type="GO" id="GO:0016020">
    <property type="term" value="C:membrane"/>
    <property type="evidence" value="ECO:0007669"/>
    <property type="project" value="UniProtKB-SubCell"/>
</dbReference>
<dbReference type="GO" id="GO:0008236">
    <property type="term" value="F:serine-type peptidase activity"/>
    <property type="evidence" value="ECO:0007669"/>
    <property type="project" value="UniProtKB-KW"/>
</dbReference>
<dbReference type="GO" id="GO:0006508">
    <property type="term" value="P:proteolysis"/>
    <property type="evidence" value="ECO:0007669"/>
    <property type="project" value="UniProtKB-KW"/>
</dbReference>
<dbReference type="Gene3D" id="2.120.10.70">
    <property type="entry name" value="Fucose-specific lectin"/>
    <property type="match status" value="1"/>
</dbReference>
<dbReference type="SUPFAM" id="SSF89372">
    <property type="entry name" value="Fucose-specific lectin"/>
    <property type="match status" value="1"/>
</dbReference>
<proteinExistence type="inferred from homology"/>